<gene>
    <name evidence="1" type="primary">ispE</name>
    <name type="ordered locus">SUN_0381</name>
</gene>
<name>ISPE_SULNB</name>
<protein>
    <recommendedName>
        <fullName evidence="1">4-diphosphocytidyl-2-C-methyl-D-erythritol kinase</fullName>
        <shortName evidence="1">CMK</shortName>
        <ecNumber evidence="1">2.7.1.148</ecNumber>
    </recommendedName>
    <alternativeName>
        <fullName evidence="1">4-(cytidine-5'-diphospho)-2-C-methyl-D-erythritol kinase</fullName>
    </alternativeName>
</protein>
<comment type="function">
    <text evidence="1">Catalyzes the phosphorylation of the position 2 hydroxy group of 4-diphosphocytidyl-2C-methyl-D-erythritol.</text>
</comment>
<comment type="catalytic activity">
    <reaction evidence="1">
        <text>4-CDP-2-C-methyl-D-erythritol + ATP = 4-CDP-2-C-methyl-D-erythritol 2-phosphate + ADP + H(+)</text>
        <dbReference type="Rhea" id="RHEA:18437"/>
        <dbReference type="ChEBI" id="CHEBI:15378"/>
        <dbReference type="ChEBI" id="CHEBI:30616"/>
        <dbReference type="ChEBI" id="CHEBI:57823"/>
        <dbReference type="ChEBI" id="CHEBI:57919"/>
        <dbReference type="ChEBI" id="CHEBI:456216"/>
        <dbReference type="EC" id="2.7.1.148"/>
    </reaction>
</comment>
<comment type="pathway">
    <text evidence="1">Isoprenoid biosynthesis; isopentenyl diphosphate biosynthesis via DXP pathway; isopentenyl diphosphate from 1-deoxy-D-xylulose 5-phosphate: step 3/6.</text>
</comment>
<comment type="similarity">
    <text evidence="1">Belongs to the GHMP kinase family. IspE subfamily.</text>
</comment>
<sequence length="255" mass="28268">MYSINAHAKVNIFLKITGHENGYHTLLSRFMRVDDLYDTITLVPGTFDSFTLEGCKGVPLHFNTIYKAYEALLEPFPKLEDFFKSHKVVVEKSIPSQAGLGGGSSDAGAFMRLINSLSQNPLSTDALAKLGSSIGADVPFFVYNYPSANVRGFGEIVEPFRETPLKLELFTPDIGCDTAKVYQTYHKYLLRTLDPKSFFGWENMDSGTLLQLIADPVALNDLYPAALSTCPALEKLDTKGWFFSGSGSTFFRVKD</sequence>
<organism>
    <name type="scientific">Sulfurovum sp. (strain NBC37-1)</name>
    <dbReference type="NCBI Taxonomy" id="387093"/>
    <lineage>
        <taxon>Bacteria</taxon>
        <taxon>Pseudomonadati</taxon>
        <taxon>Campylobacterota</taxon>
        <taxon>Epsilonproteobacteria</taxon>
        <taxon>Campylobacterales</taxon>
        <taxon>Sulfurovaceae</taxon>
        <taxon>Sulfurovum</taxon>
    </lineage>
</organism>
<evidence type="ECO:0000255" key="1">
    <source>
        <dbReference type="HAMAP-Rule" id="MF_00061"/>
    </source>
</evidence>
<feature type="chain" id="PRO_0000335761" description="4-diphosphocytidyl-2-C-methyl-D-erythritol kinase">
    <location>
        <begin position="1"/>
        <end position="255"/>
    </location>
</feature>
<feature type="active site" evidence="1">
    <location>
        <position position="9"/>
    </location>
</feature>
<feature type="active site" evidence="1">
    <location>
        <position position="137"/>
    </location>
</feature>
<feature type="binding site" evidence="1">
    <location>
        <begin position="95"/>
        <end position="105"/>
    </location>
    <ligand>
        <name>ATP</name>
        <dbReference type="ChEBI" id="CHEBI:30616"/>
    </ligand>
</feature>
<dbReference type="EC" id="2.7.1.148" evidence="1"/>
<dbReference type="EMBL" id="AP009179">
    <property type="protein sequence ID" value="BAF71341.1"/>
    <property type="molecule type" value="Genomic_DNA"/>
</dbReference>
<dbReference type="RefSeq" id="WP_011980074.1">
    <property type="nucleotide sequence ID" value="NC_009663.1"/>
</dbReference>
<dbReference type="SMR" id="A6Q782"/>
<dbReference type="STRING" id="387093.SUN_0381"/>
<dbReference type="KEGG" id="sun:SUN_0381"/>
<dbReference type="eggNOG" id="COG1947">
    <property type="taxonomic scope" value="Bacteria"/>
</dbReference>
<dbReference type="HOGENOM" id="CLU_053057_2_2_7"/>
<dbReference type="OrthoDB" id="9809438at2"/>
<dbReference type="UniPathway" id="UPA00056">
    <property type="reaction ID" value="UER00094"/>
</dbReference>
<dbReference type="Proteomes" id="UP000006378">
    <property type="component" value="Chromosome"/>
</dbReference>
<dbReference type="GO" id="GO:0050515">
    <property type="term" value="F:4-(cytidine 5'-diphospho)-2-C-methyl-D-erythritol kinase activity"/>
    <property type="evidence" value="ECO:0007669"/>
    <property type="project" value="UniProtKB-UniRule"/>
</dbReference>
<dbReference type="GO" id="GO:0005524">
    <property type="term" value="F:ATP binding"/>
    <property type="evidence" value="ECO:0007669"/>
    <property type="project" value="UniProtKB-UniRule"/>
</dbReference>
<dbReference type="GO" id="GO:0019288">
    <property type="term" value="P:isopentenyl diphosphate biosynthetic process, methylerythritol 4-phosphate pathway"/>
    <property type="evidence" value="ECO:0007669"/>
    <property type="project" value="UniProtKB-UniRule"/>
</dbReference>
<dbReference type="GO" id="GO:0016114">
    <property type="term" value="P:terpenoid biosynthetic process"/>
    <property type="evidence" value="ECO:0007669"/>
    <property type="project" value="InterPro"/>
</dbReference>
<dbReference type="Gene3D" id="3.30.230.10">
    <property type="match status" value="1"/>
</dbReference>
<dbReference type="Gene3D" id="3.30.70.890">
    <property type="entry name" value="GHMP kinase, C-terminal domain"/>
    <property type="match status" value="1"/>
</dbReference>
<dbReference type="HAMAP" id="MF_00061">
    <property type="entry name" value="IspE"/>
    <property type="match status" value="1"/>
</dbReference>
<dbReference type="InterPro" id="IPR036554">
    <property type="entry name" value="GHMP_kinase_C_sf"/>
</dbReference>
<dbReference type="InterPro" id="IPR006204">
    <property type="entry name" value="GHMP_kinase_N_dom"/>
</dbReference>
<dbReference type="InterPro" id="IPR004424">
    <property type="entry name" value="IspE"/>
</dbReference>
<dbReference type="InterPro" id="IPR020568">
    <property type="entry name" value="Ribosomal_Su5_D2-typ_SF"/>
</dbReference>
<dbReference type="InterPro" id="IPR014721">
    <property type="entry name" value="Ribsml_uS5_D2-typ_fold_subgr"/>
</dbReference>
<dbReference type="NCBIfam" id="TIGR00154">
    <property type="entry name" value="ispE"/>
    <property type="match status" value="1"/>
</dbReference>
<dbReference type="NCBIfam" id="NF003216">
    <property type="entry name" value="PRK04181.1"/>
    <property type="match status" value="1"/>
</dbReference>
<dbReference type="PANTHER" id="PTHR43527">
    <property type="entry name" value="4-DIPHOSPHOCYTIDYL-2-C-METHYL-D-ERYTHRITOL KINASE, CHLOROPLASTIC"/>
    <property type="match status" value="1"/>
</dbReference>
<dbReference type="PANTHER" id="PTHR43527:SF2">
    <property type="entry name" value="4-DIPHOSPHOCYTIDYL-2-C-METHYL-D-ERYTHRITOL KINASE, CHLOROPLASTIC"/>
    <property type="match status" value="1"/>
</dbReference>
<dbReference type="Pfam" id="PF00288">
    <property type="entry name" value="GHMP_kinases_N"/>
    <property type="match status" value="1"/>
</dbReference>
<dbReference type="PIRSF" id="PIRSF010376">
    <property type="entry name" value="IspE"/>
    <property type="match status" value="1"/>
</dbReference>
<dbReference type="SUPFAM" id="SSF55060">
    <property type="entry name" value="GHMP Kinase, C-terminal domain"/>
    <property type="match status" value="1"/>
</dbReference>
<dbReference type="SUPFAM" id="SSF54211">
    <property type="entry name" value="Ribosomal protein S5 domain 2-like"/>
    <property type="match status" value="1"/>
</dbReference>
<accession>A6Q782</accession>
<proteinExistence type="inferred from homology"/>
<keyword id="KW-0067">ATP-binding</keyword>
<keyword id="KW-0414">Isoprene biosynthesis</keyword>
<keyword id="KW-0418">Kinase</keyword>
<keyword id="KW-0547">Nucleotide-binding</keyword>
<keyword id="KW-0808">Transferase</keyword>
<reference key="1">
    <citation type="journal article" date="2007" name="Proc. Natl. Acad. Sci. U.S.A.">
        <title>Deep-sea vent epsilon-proteobacterial genomes provide insights into emergence of pathogens.</title>
        <authorList>
            <person name="Nakagawa S."/>
            <person name="Takaki Y."/>
            <person name="Shimamura S."/>
            <person name="Reysenbach A.-L."/>
            <person name="Takai K."/>
            <person name="Horikoshi K."/>
        </authorList>
    </citation>
    <scope>NUCLEOTIDE SEQUENCE [LARGE SCALE GENOMIC DNA]</scope>
    <source>
        <strain>NBC37-1</strain>
    </source>
</reference>